<keyword id="KW-0028">Amino-acid biosynthesis</keyword>
<keyword id="KW-0055">Arginine biosynthesis</keyword>
<keyword id="KW-0067">ATP-binding</keyword>
<keyword id="KW-0963">Cytoplasm</keyword>
<keyword id="KW-0418">Kinase</keyword>
<keyword id="KW-0547">Nucleotide-binding</keyword>
<keyword id="KW-0808">Transferase</keyword>
<proteinExistence type="inferred from homology"/>
<evidence type="ECO:0000255" key="1">
    <source>
        <dbReference type="HAMAP-Rule" id="MF_00082"/>
    </source>
</evidence>
<sequence>MSEAQSELQASLLAKALPYMQRYENKTIVVKYGGHAMGNAELGKAFAADIALLKQSGVNPIVVHGGGPQIGAMLTKMGIESKFEGGLRVTDQKTVEIVEMVLAGSINKEIVALINQTGEWAIGLCGKDGNMVFAEKAHKTIKDPDSNIERVLDLGFVGEVVEVDRTLLDLLAKSEMIPVIAPVAPGRDGATYNINADTFAGAIAGALSATRLLFLTDVPGVLDKQGQLIKELSVAQAHALIADGTISGGMIPKVETCIDAIKAGVQGVVILNGKTAHSVLLEIFTEHGAGTLIVP</sequence>
<gene>
    <name evidence="1" type="primary">argB</name>
    <name type="ordered locus">Arad_0695</name>
</gene>
<dbReference type="EC" id="2.7.2.8" evidence="1"/>
<dbReference type="EMBL" id="CP000628">
    <property type="protein sequence ID" value="ACM25325.1"/>
    <property type="molecule type" value="Genomic_DNA"/>
</dbReference>
<dbReference type="RefSeq" id="WP_007695451.1">
    <property type="nucleotide sequence ID" value="NC_011985.1"/>
</dbReference>
<dbReference type="SMR" id="B9J8D8"/>
<dbReference type="STRING" id="311403.Arad_0695"/>
<dbReference type="GeneID" id="86847140"/>
<dbReference type="KEGG" id="ara:Arad_0695"/>
<dbReference type="eggNOG" id="COG0548">
    <property type="taxonomic scope" value="Bacteria"/>
</dbReference>
<dbReference type="HOGENOM" id="CLU_053680_0_0_5"/>
<dbReference type="UniPathway" id="UPA00068">
    <property type="reaction ID" value="UER00107"/>
</dbReference>
<dbReference type="Proteomes" id="UP000001600">
    <property type="component" value="Chromosome 1"/>
</dbReference>
<dbReference type="GO" id="GO:0005737">
    <property type="term" value="C:cytoplasm"/>
    <property type="evidence" value="ECO:0007669"/>
    <property type="project" value="UniProtKB-SubCell"/>
</dbReference>
<dbReference type="GO" id="GO:0003991">
    <property type="term" value="F:acetylglutamate kinase activity"/>
    <property type="evidence" value="ECO:0007669"/>
    <property type="project" value="UniProtKB-UniRule"/>
</dbReference>
<dbReference type="GO" id="GO:0005524">
    <property type="term" value="F:ATP binding"/>
    <property type="evidence" value="ECO:0007669"/>
    <property type="project" value="UniProtKB-UniRule"/>
</dbReference>
<dbReference type="GO" id="GO:0042450">
    <property type="term" value="P:arginine biosynthetic process via ornithine"/>
    <property type="evidence" value="ECO:0007669"/>
    <property type="project" value="UniProtKB-UniRule"/>
</dbReference>
<dbReference type="GO" id="GO:0006526">
    <property type="term" value="P:L-arginine biosynthetic process"/>
    <property type="evidence" value="ECO:0007669"/>
    <property type="project" value="UniProtKB-UniPathway"/>
</dbReference>
<dbReference type="CDD" id="cd04250">
    <property type="entry name" value="AAK_NAGK-C"/>
    <property type="match status" value="1"/>
</dbReference>
<dbReference type="FunFam" id="3.40.1160.10:FF:000004">
    <property type="entry name" value="Acetylglutamate kinase"/>
    <property type="match status" value="1"/>
</dbReference>
<dbReference type="Gene3D" id="3.40.1160.10">
    <property type="entry name" value="Acetylglutamate kinase-like"/>
    <property type="match status" value="1"/>
</dbReference>
<dbReference type="HAMAP" id="MF_00082">
    <property type="entry name" value="ArgB"/>
    <property type="match status" value="1"/>
</dbReference>
<dbReference type="InterPro" id="IPR036393">
    <property type="entry name" value="AceGlu_kinase-like_sf"/>
</dbReference>
<dbReference type="InterPro" id="IPR004662">
    <property type="entry name" value="AcgluKinase_fam"/>
</dbReference>
<dbReference type="InterPro" id="IPR037528">
    <property type="entry name" value="ArgB"/>
</dbReference>
<dbReference type="InterPro" id="IPR001048">
    <property type="entry name" value="Asp/Glu/Uridylate_kinase"/>
</dbReference>
<dbReference type="InterPro" id="IPR001057">
    <property type="entry name" value="Glu/AcGlu_kinase"/>
</dbReference>
<dbReference type="InterPro" id="IPR041727">
    <property type="entry name" value="NAGK-C"/>
</dbReference>
<dbReference type="NCBIfam" id="TIGR00761">
    <property type="entry name" value="argB"/>
    <property type="match status" value="1"/>
</dbReference>
<dbReference type="PANTHER" id="PTHR23342">
    <property type="entry name" value="N-ACETYLGLUTAMATE SYNTHASE"/>
    <property type="match status" value="1"/>
</dbReference>
<dbReference type="PANTHER" id="PTHR23342:SF0">
    <property type="entry name" value="N-ACETYLGLUTAMATE SYNTHASE, MITOCHONDRIAL"/>
    <property type="match status" value="1"/>
</dbReference>
<dbReference type="Pfam" id="PF00696">
    <property type="entry name" value="AA_kinase"/>
    <property type="match status" value="1"/>
</dbReference>
<dbReference type="PIRSF" id="PIRSF000728">
    <property type="entry name" value="NAGK"/>
    <property type="match status" value="1"/>
</dbReference>
<dbReference type="PRINTS" id="PR00474">
    <property type="entry name" value="GLU5KINASE"/>
</dbReference>
<dbReference type="SUPFAM" id="SSF53633">
    <property type="entry name" value="Carbamate kinase-like"/>
    <property type="match status" value="1"/>
</dbReference>
<organism>
    <name type="scientific">Rhizobium rhizogenes (strain K84 / ATCC BAA-868)</name>
    <name type="common">Agrobacterium radiobacter</name>
    <dbReference type="NCBI Taxonomy" id="311403"/>
    <lineage>
        <taxon>Bacteria</taxon>
        <taxon>Pseudomonadati</taxon>
        <taxon>Pseudomonadota</taxon>
        <taxon>Alphaproteobacteria</taxon>
        <taxon>Hyphomicrobiales</taxon>
        <taxon>Rhizobiaceae</taxon>
        <taxon>Rhizobium/Agrobacterium group</taxon>
        <taxon>Rhizobium</taxon>
    </lineage>
</organism>
<reference key="1">
    <citation type="journal article" date="2009" name="J. Bacteriol.">
        <title>Genome sequences of three Agrobacterium biovars help elucidate the evolution of multichromosome genomes in bacteria.</title>
        <authorList>
            <person name="Slater S.C."/>
            <person name="Goldman B.S."/>
            <person name="Goodner B."/>
            <person name="Setubal J.C."/>
            <person name="Farrand S.K."/>
            <person name="Nester E.W."/>
            <person name="Burr T.J."/>
            <person name="Banta L."/>
            <person name="Dickerman A.W."/>
            <person name="Paulsen I."/>
            <person name="Otten L."/>
            <person name="Suen G."/>
            <person name="Welch R."/>
            <person name="Almeida N.F."/>
            <person name="Arnold F."/>
            <person name="Burton O.T."/>
            <person name="Du Z."/>
            <person name="Ewing A."/>
            <person name="Godsy E."/>
            <person name="Heisel S."/>
            <person name="Houmiel K.L."/>
            <person name="Jhaveri J."/>
            <person name="Lu J."/>
            <person name="Miller N.M."/>
            <person name="Norton S."/>
            <person name="Chen Q."/>
            <person name="Phoolcharoen W."/>
            <person name="Ohlin V."/>
            <person name="Ondrusek D."/>
            <person name="Pride N."/>
            <person name="Stricklin S.L."/>
            <person name="Sun J."/>
            <person name="Wheeler C."/>
            <person name="Wilson L."/>
            <person name="Zhu H."/>
            <person name="Wood D.W."/>
        </authorList>
    </citation>
    <scope>NUCLEOTIDE SEQUENCE [LARGE SCALE GENOMIC DNA]</scope>
    <source>
        <strain>K84 / ATCC BAA-868</strain>
    </source>
</reference>
<comment type="function">
    <text evidence="1">Catalyzes the ATP-dependent phosphorylation of N-acetyl-L-glutamate.</text>
</comment>
<comment type="catalytic activity">
    <reaction evidence="1">
        <text>N-acetyl-L-glutamate + ATP = N-acetyl-L-glutamyl 5-phosphate + ADP</text>
        <dbReference type="Rhea" id="RHEA:14629"/>
        <dbReference type="ChEBI" id="CHEBI:30616"/>
        <dbReference type="ChEBI" id="CHEBI:44337"/>
        <dbReference type="ChEBI" id="CHEBI:57936"/>
        <dbReference type="ChEBI" id="CHEBI:456216"/>
        <dbReference type="EC" id="2.7.2.8"/>
    </reaction>
</comment>
<comment type="pathway">
    <text evidence="1">Amino-acid biosynthesis; L-arginine biosynthesis; N(2)-acetyl-L-ornithine from L-glutamate: step 2/4.</text>
</comment>
<comment type="subcellular location">
    <subcellularLocation>
        <location evidence="1">Cytoplasm</location>
    </subcellularLocation>
</comment>
<comment type="similarity">
    <text evidence="1">Belongs to the acetylglutamate kinase family. ArgB subfamily.</text>
</comment>
<protein>
    <recommendedName>
        <fullName evidence="1">Acetylglutamate kinase</fullName>
        <ecNumber evidence="1">2.7.2.8</ecNumber>
    </recommendedName>
    <alternativeName>
        <fullName evidence="1">N-acetyl-L-glutamate 5-phosphotransferase</fullName>
    </alternativeName>
    <alternativeName>
        <fullName evidence="1">NAG kinase</fullName>
        <shortName evidence="1">NAGK</shortName>
    </alternativeName>
</protein>
<feature type="chain" id="PRO_1000118327" description="Acetylglutamate kinase">
    <location>
        <begin position="1"/>
        <end position="295"/>
    </location>
</feature>
<feature type="binding site" evidence="1">
    <location>
        <begin position="66"/>
        <end position="67"/>
    </location>
    <ligand>
        <name>substrate</name>
    </ligand>
</feature>
<feature type="binding site" evidence="1">
    <location>
        <position position="88"/>
    </location>
    <ligand>
        <name>substrate</name>
    </ligand>
</feature>
<feature type="binding site" evidence="1">
    <location>
        <position position="193"/>
    </location>
    <ligand>
        <name>substrate</name>
    </ligand>
</feature>
<feature type="site" description="Transition state stabilizer" evidence="1">
    <location>
        <position position="31"/>
    </location>
</feature>
<feature type="site" description="Transition state stabilizer" evidence="1">
    <location>
        <position position="253"/>
    </location>
</feature>
<name>ARGB_RHIR8</name>
<accession>B9J8D8</accession>